<accession>C5BRJ3</accession>
<reference key="1">
    <citation type="journal article" date="2009" name="PLoS ONE">
        <title>The complete genome of Teredinibacter turnerae T7901: an intracellular endosymbiont of marine wood-boring bivalves (shipworms).</title>
        <authorList>
            <person name="Yang J.C."/>
            <person name="Madupu R."/>
            <person name="Durkin A.S."/>
            <person name="Ekborg N.A."/>
            <person name="Pedamallu C.S."/>
            <person name="Hostetler J.B."/>
            <person name="Radune D."/>
            <person name="Toms B.S."/>
            <person name="Henrissat B."/>
            <person name="Coutinho P.M."/>
            <person name="Schwarz S."/>
            <person name="Field L."/>
            <person name="Trindade-Silva A.E."/>
            <person name="Soares C.A.G."/>
            <person name="Elshahawi S."/>
            <person name="Hanora A."/>
            <person name="Schmidt E.W."/>
            <person name="Haygood M.G."/>
            <person name="Posfai J."/>
            <person name="Benner J."/>
            <person name="Madinger C."/>
            <person name="Nove J."/>
            <person name="Anton B."/>
            <person name="Chaudhary K."/>
            <person name="Foster J."/>
            <person name="Holman A."/>
            <person name="Kumar S."/>
            <person name="Lessard P.A."/>
            <person name="Luyten Y.A."/>
            <person name="Slatko B."/>
            <person name="Wood N."/>
            <person name="Wu B."/>
            <person name="Teplitski M."/>
            <person name="Mougous J.D."/>
            <person name="Ward N."/>
            <person name="Eisen J.A."/>
            <person name="Badger J.H."/>
            <person name="Distel D.L."/>
        </authorList>
    </citation>
    <scope>NUCLEOTIDE SEQUENCE [LARGE SCALE GENOMIC DNA]</scope>
    <source>
        <strain>ATCC 39867 / T7901</strain>
    </source>
</reference>
<evidence type="ECO:0000255" key="1">
    <source>
        <dbReference type="HAMAP-Rule" id="MF_00218"/>
    </source>
</evidence>
<dbReference type="EC" id="4.1.1.37" evidence="1"/>
<dbReference type="EMBL" id="CP001614">
    <property type="protein sequence ID" value="ACR13693.1"/>
    <property type="molecule type" value="Genomic_DNA"/>
</dbReference>
<dbReference type="RefSeq" id="WP_015819808.1">
    <property type="nucleotide sequence ID" value="NC_012997.1"/>
</dbReference>
<dbReference type="SMR" id="C5BRJ3"/>
<dbReference type="STRING" id="377629.TERTU_3573"/>
<dbReference type="KEGG" id="ttu:TERTU_3573"/>
<dbReference type="eggNOG" id="COG0407">
    <property type="taxonomic scope" value="Bacteria"/>
</dbReference>
<dbReference type="HOGENOM" id="CLU_040933_0_0_6"/>
<dbReference type="OrthoDB" id="9806656at2"/>
<dbReference type="UniPathway" id="UPA00251">
    <property type="reaction ID" value="UER00321"/>
</dbReference>
<dbReference type="Proteomes" id="UP000009080">
    <property type="component" value="Chromosome"/>
</dbReference>
<dbReference type="GO" id="GO:0005829">
    <property type="term" value="C:cytosol"/>
    <property type="evidence" value="ECO:0007669"/>
    <property type="project" value="TreeGrafter"/>
</dbReference>
<dbReference type="GO" id="GO:0004853">
    <property type="term" value="F:uroporphyrinogen decarboxylase activity"/>
    <property type="evidence" value="ECO:0007669"/>
    <property type="project" value="UniProtKB-UniRule"/>
</dbReference>
<dbReference type="GO" id="GO:0019353">
    <property type="term" value="P:protoporphyrinogen IX biosynthetic process from glutamate"/>
    <property type="evidence" value="ECO:0007669"/>
    <property type="project" value="TreeGrafter"/>
</dbReference>
<dbReference type="CDD" id="cd00717">
    <property type="entry name" value="URO-D"/>
    <property type="match status" value="1"/>
</dbReference>
<dbReference type="FunFam" id="3.20.20.210:FF:000001">
    <property type="entry name" value="Uroporphyrinogen decarboxylase"/>
    <property type="match status" value="1"/>
</dbReference>
<dbReference type="Gene3D" id="3.20.20.210">
    <property type="match status" value="1"/>
</dbReference>
<dbReference type="HAMAP" id="MF_00218">
    <property type="entry name" value="URO_D"/>
    <property type="match status" value="1"/>
</dbReference>
<dbReference type="InterPro" id="IPR038071">
    <property type="entry name" value="UROD/MetE-like_sf"/>
</dbReference>
<dbReference type="InterPro" id="IPR006361">
    <property type="entry name" value="Uroporphyrinogen_deCO2ase_HemE"/>
</dbReference>
<dbReference type="InterPro" id="IPR000257">
    <property type="entry name" value="Uroporphyrinogen_deCOase"/>
</dbReference>
<dbReference type="NCBIfam" id="TIGR01464">
    <property type="entry name" value="hemE"/>
    <property type="match status" value="1"/>
</dbReference>
<dbReference type="PANTHER" id="PTHR21091">
    <property type="entry name" value="METHYLTETRAHYDROFOLATE:HOMOCYSTEINE METHYLTRANSFERASE RELATED"/>
    <property type="match status" value="1"/>
</dbReference>
<dbReference type="PANTHER" id="PTHR21091:SF169">
    <property type="entry name" value="UROPORPHYRINOGEN DECARBOXYLASE"/>
    <property type="match status" value="1"/>
</dbReference>
<dbReference type="Pfam" id="PF01208">
    <property type="entry name" value="URO-D"/>
    <property type="match status" value="1"/>
</dbReference>
<dbReference type="SUPFAM" id="SSF51726">
    <property type="entry name" value="UROD/MetE-like"/>
    <property type="match status" value="1"/>
</dbReference>
<dbReference type="PROSITE" id="PS00906">
    <property type="entry name" value="UROD_1"/>
    <property type="match status" value="1"/>
</dbReference>
<dbReference type="PROSITE" id="PS00907">
    <property type="entry name" value="UROD_2"/>
    <property type="match status" value="1"/>
</dbReference>
<keyword id="KW-0963">Cytoplasm</keyword>
<keyword id="KW-0210">Decarboxylase</keyword>
<keyword id="KW-0456">Lyase</keyword>
<keyword id="KW-0627">Porphyrin biosynthesis</keyword>
<keyword id="KW-1185">Reference proteome</keyword>
<name>DCUP_TERTT</name>
<sequence>MTELKNDRFLRALQGQPVDVTPVWMMRQAGRYLPEYRATRARAGDFMGLCTNPQLACEVTLQPLQRYPLDAAILFSDILTVPDAMGLGLYFETGEGPKFRNPVRTAAQVEALPVVNAENELTYVLDAVKTIRHELNGAVPLIGFSGSPWTLMTYMVEGGSSKDFRRSKAMLYSEPEVARLLLDKLVASVTDYLNAQIRAGAQAVQIFDSWGGALAHDAYLEFSLKPMQQIVNGLIREHQGRQVPVILFTKGGGQWLEAMAETGVTALGLDWTTDIGNARERVGGKVALQGNMDPSVLYASTSAIRDEVGRILASYGHGSGHVFNLGHGITPEVDPVHAGAFINAVHELSAGYHQ</sequence>
<organism>
    <name type="scientific">Teredinibacter turnerae (strain ATCC 39867 / T7901)</name>
    <dbReference type="NCBI Taxonomy" id="377629"/>
    <lineage>
        <taxon>Bacteria</taxon>
        <taxon>Pseudomonadati</taxon>
        <taxon>Pseudomonadota</taxon>
        <taxon>Gammaproteobacteria</taxon>
        <taxon>Cellvibrionales</taxon>
        <taxon>Cellvibrionaceae</taxon>
        <taxon>Teredinibacter</taxon>
    </lineage>
</organism>
<gene>
    <name evidence="1" type="primary">hemE</name>
    <name type="ordered locus">TERTU_3573</name>
</gene>
<protein>
    <recommendedName>
        <fullName evidence="1">Uroporphyrinogen decarboxylase</fullName>
        <shortName evidence="1">UPD</shortName>
        <shortName evidence="1">URO-D</shortName>
        <ecNumber evidence="1">4.1.1.37</ecNumber>
    </recommendedName>
</protein>
<comment type="function">
    <text evidence="1">Catalyzes the decarboxylation of four acetate groups of uroporphyrinogen-III to yield coproporphyrinogen-III.</text>
</comment>
<comment type="catalytic activity">
    <reaction evidence="1">
        <text>uroporphyrinogen III + 4 H(+) = coproporphyrinogen III + 4 CO2</text>
        <dbReference type="Rhea" id="RHEA:19865"/>
        <dbReference type="ChEBI" id="CHEBI:15378"/>
        <dbReference type="ChEBI" id="CHEBI:16526"/>
        <dbReference type="ChEBI" id="CHEBI:57308"/>
        <dbReference type="ChEBI" id="CHEBI:57309"/>
        <dbReference type="EC" id="4.1.1.37"/>
    </reaction>
</comment>
<comment type="pathway">
    <text evidence="1">Porphyrin-containing compound metabolism; protoporphyrin-IX biosynthesis; coproporphyrinogen-III from 5-aminolevulinate: step 4/4.</text>
</comment>
<comment type="subunit">
    <text evidence="1">Homodimer.</text>
</comment>
<comment type="subcellular location">
    <subcellularLocation>
        <location evidence="1">Cytoplasm</location>
    </subcellularLocation>
</comment>
<comment type="similarity">
    <text evidence="1">Belongs to the uroporphyrinogen decarboxylase family.</text>
</comment>
<feature type="chain" id="PRO_1000204241" description="Uroporphyrinogen decarboxylase">
    <location>
        <begin position="1"/>
        <end position="354"/>
    </location>
</feature>
<feature type="binding site" evidence="1">
    <location>
        <begin position="27"/>
        <end position="31"/>
    </location>
    <ligand>
        <name>substrate</name>
    </ligand>
</feature>
<feature type="binding site" evidence="1">
    <location>
        <position position="77"/>
    </location>
    <ligand>
        <name>substrate</name>
    </ligand>
</feature>
<feature type="binding site" evidence="1">
    <location>
        <position position="154"/>
    </location>
    <ligand>
        <name>substrate</name>
    </ligand>
</feature>
<feature type="binding site" evidence="1">
    <location>
        <position position="209"/>
    </location>
    <ligand>
        <name>substrate</name>
    </ligand>
</feature>
<feature type="binding site" evidence="1">
    <location>
        <position position="327"/>
    </location>
    <ligand>
        <name>substrate</name>
    </ligand>
</feature>
<feature type="site" description="Transition state stabilizer" evidence="1">
    <location>
        <position position="77"/>
    </location>
</feature>
<proteinExistence type="inferred from homology"/>